<feature type="chain" id="PRO_0000008155" description="Small ribosomal subunit biogenesis GTPase RsgA">
    <location>
        <begin position="1"/>
        <end position="350"/>
    </location>
</feature>
<feature type="domain" description="CP-type G" evidence="2">
    <location>
        <begin position="104"/>
        <end position="273"/>
    </location>
</feature>
<feature type="region of interest" description="Disordered" evidence="3">
    <location>
        <begin position="1"/>
        <end position="27"/>
    </location>
</feature>
<feature type="compositionally biased region" description="Polar residues" evidence="3">
    <location>
        <begin position="1"/>
        <end position="17"/>
    </location>
</feature>
<feature type="binding site" evidence="1">
    <location>
        <begin position="160"/>
        <end position="163"/>
    </location>
    <ligand>
        <name>GTP</name>
        <dbReference type="ChEBI" id="CHEBI:37565"/>
    </ligand>
</feature>
<feature type="binding site" evidence="1">
    <location>
        <begin position="214"/>
        <end position="222"/>
    </location>
    <ligand>
        <name>GTP</name>
        <dbReference type="ChEBI" id="CHEBI:37565"/>
    </ligand>
</feature>
<feature type="binding site" evidence="1">
    <location>
        <position position="297"/>
    </location>
    <ligand>
        <name>Zn(2+)</name>
        <dbReference type="ChEBI" id="CHEBI:29105"/>
    </ligand>
</feature>
<feature type="binding site" evidence="1">
    <location>
        <position position="302"/>
    </location>
    <ligand>
        <name>Zn(2+)</name>
        <dbReference type="ChEBI" id="CHEBI:29105"/>
    </ligand>
</feature>
<feature type="binding site" evidence="1">
    <location>
        <position position="304"/>
    </location>
    <ligand>
        <name>Zn(2+)</name>
        <dbReference type="ChEBI" id="CHEBI:29105"/>
    </ligand>
</feature>
<feature type="binding site" evidence="1">
    <location>
        <position position="310"/>
    </location>
    <ligand>
        <name>Zn(2+)</name>
        <dbReference type="ChEBI" id="CHEBI:29105"/>
    </ligand>
</feature>
<evidence type="ECO:0000255" key="1">
    <source>
        <dbReference type="HAMAP-Rule" id="MF_01820"/>
    </source>
</evidence>
<evidence type="ECO:0000255" key="2">
    <source>
        <dbReference type="PROSITE-ProRule" id="PRU01058"/>
    </source>
</evidence>
<evidence type="ECO:0000256" key="3">
    <source>
        <dbReference type="SAM" id="MobiDB-lite"/>
    </source>
</evidence>
<evidence type="ECO:0000305" key="4"/>
<protein>
    <recommendedName>
        <fullName evidence="1">Small ribosomal subunit biogenesis GTPase RsgA</fullName>
        <ecNumber evidence="1">3.6.1.-</ecNumber>
    </recommendedName>
</protein>
<name>RSGA_SALTI</name>
<proteinExistence type="inferred from homology"/>
<organism>
    <name type="scientific">Salmonella typhi</name>
    <dbReference type="NCBI Taxonomy" id="90370"/>
    <lineage>
        <taxon>Bacteria</taxon>
        <taxon>Pseudomonadati</taxon>
        <taxon>Pseudomonadota</taxon>
        <taxon>Gammaproteobacteria</taxon>
        <taxon>Enterobacterales</taxon>
        <taxon>Enterobacteriaceae</taxon>
        <taxon>Salmonella</taxon>
    </lineage>
</organism>
<sequence length="350" mass="38947">MSKNKLSKGQQRRVNANHQRRLKTSAEKADYDDNLFGEPAEGIVISRFGMHADVESADGEVHRCNIRRTIRSLVTGDRVVWRPGKAAAEGVNVKGIVEAVHERTSVLTRPDFYDGVKPIAANIDQIVIVSAILPELSLNIIDRYLVGCETLQVEPLIVLNKIDLLDDEGMDFVNEQMNIYRNIGYRVLMVSSHTQDGLKPLEEALTGRISIFAGQSGVGKSSLLNALLGLQNEILTNDVSNVSGLGQHTTTAARLYHFPHGGDVIDSPGVREFGLWHLEPEQITQGFVEFHDYLGHCKYRDCKHDADPGCAIREAVENGAIAETRFENYHRILESMAQVKTRKNFSDTDD</sequence>
<comment type="function">
    <text evidence="1">One of several proteins that assist in the late maturation steps of the functional core of the 30S ribosomal subunit. Helps release RbfA from mature subunits. May play a role in the assembly of ribosomal proteins into the subunit. Circularly permuted GTPase that catalyzes slow GTP hydrolysis, GTPase activity is stimulated by the 30S ribosomal subunit.</text>
</comment>
<comment type="cofactor">
    <cofactor evidence="1">
        <name>Zn(2+)</name>
        <dbReference type="ChEBI" id="CHEBI:29105"/>
    </cofactor>
    <text evidence="1">Binds 1 zinc ion per subunit.</text>
</comment>
<comment type="subunit">
    <text evidence="1">Monomer. Associates with 30S ribosomal subunit, binds 16S rRNA.</text>
</comment>
<comment type="subcellular location">
    <subcellularLocation>
        <location evidence="1">Cytoplasm</location>
    </subcellularLocation>
</comment>
<comment type="similarity">
    <text evidence="1">Belongs to the TRAFAC class YlqF/YawG GTPase family. RsgA subfamily.</text>
</comment>
<comment type="sequence caution" evidence="4">
    <conflict type="erroneous initiation">
        <sequence resource="EMBL-CDS" id="AAO71852"/>
    </conflict>
    <text>Extended N-terminus.</text>
</comment>
<comment type="sequence caution" evidence="4">
    <conflict type="erroneous initiation">
        <sequence resource="EMBL-CDS" id="CAD06829"/>
    </conflict>
    <text>Extended N-terminus.</text>
</comment>
<gene>
    <name evidence="1" type="primary">rsgA</name>
    <name type="ordered locus">STY4709</name>
    <name type="ordered locus">t4401</name>
</gene>
<keyword id="KW-0963">Cytoplasm</keyword>
<keyword id="KW-0342">GTP-binding</keyword>
<keyword id="KW-0378">Hydrolase</keyword>
<keyword id="KW-0479">Metal-binding</keyword>
<keyword id="KW-0547">Nucleotide-binding</keyword>
<keyword id="KW-0690">Ribosome biogenesis</keyword>
<keyword id="KW-0694">RNA-binding</keyword>
<keyword id="KW-0699">rRNA-binding</keyword>
<keyword id="KW-0862">Zinc</keyword>
<accession>Q8Z193</accession>
<dbReference type="EC" id="3.6.1.-" evidence="1"/>
<dbReference type="EMBL" id="AL513382">
    <property type="protein sequence ID" value="CAD06829.1"/>
    <property type="status" value="ALT_INIT"/>
    <property type="molecule type" value="Genomic_DNA"/>
</dbReference>
<dbReference type="EMBL" id="AE014613">
    <property type="protein sequence ID" value="AAO71852.1"/>
    <property type="status" value="ALT_INIT"/>
    <property type="molecule type" value="Genomic_DNA"/>
</dbReference>
<dbReference type="RefSeq" id="NP_458788.3">
    <property type="nucleotide sequence ID" value="NC_003198.1"/>
</dbReference>
<dbReference type="RefSeq" id="WP_000041948.1">
    <property type="nucleotide sequence ID" value="NZ_WSUR01000012.1"/>
</dbReference>
<dbReference type="SMR" id="Q8Z193"/>
<dbReference type="STRING" id="220341.gene:17588527"/>
<dbReference type="KEGG" id="stt:t4401"/>
<dbReference type="KEGG" id="sty:STY4709"/>
<dbReference type="PATRIC" id="fig|220341.7.peg.4810"/>
<dbReference type="eggNOG" id="COG1162">
    <property type="taxonomic scope" value="Bacteria"/>
</dbReference>
<dbReference type="HOGENOM" id="CLU_033617_2_0_6"/>
<dbReference type="OMA" id="CLVAAYD"/>
<dbReference type="Proteomes" id="UP000000541">
    <property type="component" value="Chromosome"/>
</dbReference>
<dbReference type="Proteomes" id="UP000002670">
    <property type="component" value="Chromosome"/>
</dbReference>
<dbReference type="GO" id="GO:0005737">
    <property type="term" value="C:cytoplasm"/>
    <property type="evidence" value="ECO:0007669"/>
    <property type="project" value="UniProtKB-SubCell"/>
</dbReference>
<dbReference type="GO" id="GO:0005525">
    <property type="term" value="F:GTP binding"/>
    <property type="evidence" value="ECO:0007669"/>
    <property type="project" value="UniProtKB-UniRule"/>
</dbReference>
<dbReference type="GO" id="GO:0003924">
    <property type="term" value="F:GTPase activity"/>
    <property type="evidence" value="ECO:0007669"/>
    <property type="project" value="UniProtKB-UniRule"/>
</dbReference>
<dbReference type="GO" id="GO:0046872">
    <property type="term" value="F:metal ion binding"/>
    <property type="evidence" value="ECO:0007669"/>
    <property type="project" value="UniProtKB-KW"/>
</dbReference>
<dbReference type="GO" id="GO:0019843">
    <property type="term" value="F:rRNA binding"/>
    <property type="evidence" value="ECO:0007669"/>
    <property type="project" value="UniProtKB-KW"/>
</dbReference>
<dbReference type="GO" id="GO:0042274">
    <property type="term" value="P:ribosomal small subunit biogenesis"/>
    <property type="evidence" value="ECO:0007669"/>
    <property type="project" value="UniProtKB-UniRule"/>
</dbReference>
<dbReference type="CDD" id="cd01854">
    <property type="entry name" value="YjeQ_EngC"/>
    <property type="match status" value="1"/>
</dbReference>
<dbReference type="FunFam" id="1.10.40.50:FF:000001">
    <property type="entry name" value="Small ribosomal subunit biogenesis GTPase RsgA"/>
    <property type="match status" value="1"/>
</dbReference>
<dbReference type="FunFam" id="3.40.50.300:FF:000389">
    <property type="entry name" value="Small ribosomal subunit biogenesis GTPase RsgA"/>
    <property type="match status" value="1"/>
</dbReference>
<dbReference type="Gene3D" id="2.40.50.140">
    <property type="entry name" value="Nucleic acid-binding proteins"/>
    <property type="match status" value="1"/>
</dbReference>
<dbReference type="Gene3D" id="3.40.50.300">
    <property type="entry name" value="P-loop containing nucleotide triphosphate hydrolases"/>
    <property type="match status" value="1"/>
</dbReference>
<dbReference type="Gene3D" id="1.10.40.50">
    <property type="entry name" value="Probable gtpase engc, domain 3"/>
    <property type="match status" value="1"/>
</dbReference>
<dbReference type="HAMAP" id="MF_01820">
    <property type="entry name" value="GTPase_RsgA"/>
    <property type="match status" value="1"/>
</dbReference>
<dbReference type="InterPro" id="IPR030378">
    <property type="entry name" value="G_CP_dom"/>
</dbReference>
<dbReference type="InterPro" id="IPR012340">
    <property type="entry name" value="NA-bd_OB-fold"/>
</dbReference>
<dbReference type="InterPro" id="IPR027417">
    <property type="entry name" value="P-loop_NTPase"/>
</dbReference>
<dbReference type="InterPro" id="IPR004881">
    <property type="entry name" value="Ribosome_biogen_GTPase_RsgA"/>
</dbReference>
<dbReference type="InterPro" id="IPR010914">
    <property type="entry name" value="RsgA_GTPase_dom"/>
</dbReference>
<dbReference type="NCBIfam" id="NF008931">
    <property type="entry name" value="PRK12288.1"/>
    <property type="match status" value="1"/>
</dbReference>
<dbReference type="NCBIfam" id="TIGR00157">
    <property type="entry name" value="ribosome small subunit-dependent GTPase A"/>
    <property type="match status" value="1"/>
</dbReference>
<dbReference type="PANTHER" id="PTHR32120">
    <property type="entry name" value="SMALL RIBOSOMAL SUBUNIT BIOGENESIS GTPASE RSGA"/>
    <property type="match status" value="1"/>
</dbReference>
<dbReference type="PANTHER" id="PTHR32120:SF11">
    <property type="entry name" value="SMALL RIBOSOMAL SUBUNIT BIOGENESIS GTPASE RSGA 1, MITOCHONDRIAL-RELATED"/>
    <property type="match status" value="1"/>
</dbReference>
<dbReference type="Pfam" id="PF03193">
    <property type="entry name" value="RsgA_GTPase"/>
    <property type="match status" value="1"/>
</dbReference>
<dbReference type="SUPFAM" id="SSF52540">
    <property type="entry name" value="P-loop containing nucleoside triphosphate hydrolases"/>
    <property type="match status" value="1"/>
</dbReference>
<dbReference type="PROSITE" id="PS50936">
    <property type="entry name" value="ENGC_GTPASE"/>
    <property type="match status" value="1"/>
</dbReference>
<dbReference type="PROSITE" id="PS51721">
    <property type="entry name" value="G_CP"/>
    <property type="match status" value="1"/>
</dbReference>
<reference key="1">
    <citation type="journal article" date="2001" name="Nature">
        <title>Complete genome sequence of a multiple drug resistant Salmonella enterica serovar Typhi CT18.</title>
        <authorList>
            <person name="Parkhill J."/>
            <person name="Dougan G."/>
            <person name="James K.D."/>
            <person name="Thomson N.R."/>
            <person name="Pickard D."/>
            <person name="Wain J."/>
            <person name="Churcher C.M."/>
            <person name="Mungall K.L."/>
            <person name="Bentley S.D."/>
            <person name="Holden M.T.G."/>
            <person name="Sebaihia M."/>
            <person name="Baker S."/>
            <person name="Basham D."/>
            <person name="Brooks K."/>
            <person name="Chillingworth T."/>
            <person name="Connerton P."/>
            <person name="Cronin A."/>
            <person name="Davis P."/>
            <person name="Davies R.M."/>
            <person name="Dowd L."/>
            <person name="White N."/>
            <person name="Farrar J."/>
            <person name="Feltwell T."/>
            <person name="Hamlin N."/>
            <person name="Haque A."/>
            <person name="Hien T.T."/>
            <person name="Holroyd S."/>
            <person name="Jagels K."/>
            <person name="Krogh A."/>
            <person name="Larsen T.S."/>
            <person name="Leather S."/>
            <person name="Moule S."/>
            <person name="O'Gaora P."/>
            <person name="Parry C."/>
            <person name="Quail M.A."/>
            <person name="Rutherford K.M."/>
            <person name="Simmonds M."/>
            <person name="Skelton J."/>
            <person name="Stevens K."/>
            <person name="Whitehead S."/>
            <person name="Barrell B.G."/>
        </authorList>
    </citation>
    <scope>NUCLEOTIDE SEQUENCE [LARGE SCALE GENOMIC DNA]</scope>
    <source>
        <strain>CT18</strain>
    </source>
</reference>
<reference key="2">
    <citation type="journal article" date="2003" name="J. Bacteriol.">
        <title>Comparative genomics of Salmonella enterica serovar Typhi strains Ty2 and CT18.</title>
        <authorList>
            <person name="Deng W."/>
            <person name="Liou S.-R."/>
            <person name="Plunkett G. III"/>
            <person name="Mayhew G.F."/>
            <person name="Rose D.J."/>
            <person name="Burland V."/>
            <person name="Kodoyianni V."/>
            <person name="Schwartz D.C."/>
            <person name="Blattner F.R."/>
        </authorList>
    </citation>
    <scope>NUCLEOTIDE SEQUENCE [LARGE SCALE GENOMIC DNA]</scope>
    <source>
        <strain>ATCC 700931 / Ty2</strain>
    </source>
</reference>